<proteinExistence type="inferred from homology"/>
<organism>
    <name type="scientific">Dehalococcoides mccartyi (strain ATCC BAA-2100 / JCM 16839 / KCTC 5957 / BAV1)</name>
    <dbReference type="NCBI Taxonomy" id="216389"/>
    <lineage>
        <taxon>Bacteria</taxon>
        <taxon>Bacillati</taxon>
        <taxon>Chloroflexota</taxon>
        <taxon>Dehalococcoidia</taxon>
        <taxon>Dehalococcoidales</taxon>
        <taxon>Dehalococcoidaceae</taxon>
        <taxon>Dehalococcoides</taxon>
    </lineage>
</organism>
<reference key="1">
    <citation type="submission" date="2007-05" db="EMBL/GenBank/DDBJ databases">
        <title>Complete sequence of Dehalococcoides sp. BAV1.</title>
        <authorList>
            <consortium name="US DOE Joint Genome Institute"/>
            <person name="Copeland A."/>
            <person name="Lucas S."/>
            <person name="Lapidus A."/>
            <person name="Barry K."/>
            <person name="Detter J.C."/>
            <person name="Glavina del Rio T."/>
            <person name="Hammon N."/>
            <person name="Israni S."/>
            <person name="Pitluck S."/>
            <person name="Lowry S."/>
            <person name="Clum A."/>
            <person name="Schmutz J."/>
            <person name="Larimer F."/>
            <person name="Land M."/>
            <person name="Hauser L."/>
            <person name="Kyrpides N."/>
            <person name="Kim E."/>
            <person name="Ritalahti K.M."/>
            <person name="Loeffler F."/>
            <person name="Richardson P."/>
        </authorList>
    </citation>
    <scope>NUCLEOTIDE SEQUENCE [LARGE SCALE GENOMIC DNA]</scope>
    <source>
        <strain>ATCC BAA-2100 / JCM 16839 / KCTC 5957 / BAV1</strain>
    </source>
</reference>
<dbReference type="EC" id="6.3.4.4" evidence="1"/>
<dbReference type="EMBL" id="CP000688">
    <property type="protein sequence ID" value="ABQ17449.1"/>
    <property type="status" value="ALT_INIT"/>
    <property type="molecule type" value="Genomic_DNA"/>
</dbReference>
<dbReference type="SMR" id="A5FQS4"/>
<dbReference type="KEGG" id="deb:DehaBAV1_0867"/>
<dbReference type="PATRIC" id="fig|216389.18.peg.917"/>
<dbReference type="HOGENOM" id="CLU_029848_0_0_0"/>
<dbReference type="UniPathway" id="UPA00075">
    <property type="reaction ID" value="UER00335"/>
</dbReference>
<dbReference type="GO" id="GO:0005737">
    <property type="term" value="C:cytoplasm"/>
    <property type="evidence" value="ECO:0007669"/>
    <property type="project" value="UniProtKB-SubCell"/>
</dbReference>
<dbReference type="GO" id="GO:0004019">
    <property type="term" value="F:adenylosuccinate synthase activity"/>
    <property type="evidence" value="ECO:0007669"/>
    <property type="project" value="UniProtKB-UniRule"/>
</dbReference>
<dbReference type="GO" id="GO:0005525">
    <property type="term" value="F:GTP binding"/>
    <property type="evidence" value="ECO:0007669"/>
    <property type="project" value="UniProtKB-UniRule"/>
</dbReference>
<dbReference type="GO" id="GO:0000287">
    <property type="term" value="F:magnesium ion binding"/>
    <property type="evidence" value="ECO:0007669"/>
    <property type="project" value="UniProtKB-UniRule"/>
</dbReference>
<dbReference type="GO" id="GO:0044208">
    <property type="term" value="P:'de novo' AMP biosynthetic process"/>
    <property type="evidence" value="ECO:0007669"/>
    <property type="project" value="UniProtKB-UniRule"/>
</dbReference>
<dbReference type="GO" id="GO:0046040">
    <property type="term" value="P:IMP metabolic process"/>
    <property type="evidence" value="ECO:0007669"/>
    <property type="project" value="TreeGrafter"/>
</dbReference>
<dbReference type="CDD" id="cd03108">
    <property type="entry name" value="AdSS"/>
    <property type="match status" value="1"/>
</dbReference>
<dbReference type="FunFam" id="1.10.300.10:FF:000001">
    <property type="entry name" value="Adenylosuccinate synthetase"/>
    <property type="match status" value="1"/>
</dbReference>
<dbReference type="FunFam" id="3.90.170.10:FF:000001">
    <property type="entry name" value="Adenylosuccinate synthetase"/>
    <property type="match status" value="1"/>
</dbReference>
<dbReference type="Gene3D" id="3.40.440.10">
    <property type="entry name" value="Adenylosuccinate Synthetase, subunit A, domain 1"/>
    <property type="match status" value="1"/>
</dbReference>
<dbReference type="Gene3D" id="1.10.300.10">
    <property type="entry name" value="Adenylosuccinate Synthetase, subunit A, domain 2"/>
    <property type="match status" value="1"/>
</dbReference>
<dbReference type="Gene3D" id="3.90.170.10">
    <property type="entry name" value="Adenylosuccinate Synthetase, subunit A, domain 3"/>
    <property type="match status" value="1"/>
</dbReference>
<dbReference type="HAMAP" id="MF_00011">
    <property type="entry name" value="Adenylosucc_synth"/>
    <property type="match status" value="1"/>
</dbReference>
<dbReference type="InterPro" id="IPR018220">
    <property type="entry name" value="Adenylosuccin_syn_GTP-bd"/>
</dbReference>
<dbReference type="InterPro" id="IPR042109">
    <property type="entry name" value="Adenylosuccinate_synth_dom1"/>
</dbReference>
<dbReference type="InterPro" id="IPR042110">
    <property type="entry name" value="Adenylosuccinate_synth_dom2"/>
</dbReference>
<dbReference type="InterPro" id="IPR042111">
    <property type="entry name" value="Adenylosuccinate_synth_dom3"/>
</dbReference>
<dbReference type="InterPro" id="IPR001114">
    <property type="entry name" value="Adenylosuccinate_synthetase"/>
</dbReference>
<dbReference type="InterPro" id="IPR027417">
    <property type="entry name" value="P-loop_NTPase"/>
</dbReference>
<dbReference type="NCBIfam" id="NF002223">
    <property type="entry name" value="PRK01117.1"/>
    <property type="match status" value="1"/>
</dbReference>
<dbReference type="NCBIfam" id="TIGR00184">
    <property type="entry name" value="purA"/>
    <property type="match status" value="1"/>
</dbReference>
<dbReference type="PANTHER" id="PTHR11846">
    <property type="entry name" value="ADENYLOSUCCINATE SYNTHETASE"/>
    <property type="match status" value="1"/>
</dbReference>
<dbReference type="PANTHER" id="PTHR11846:SF0">
    <property type="entry name" value="ADENYLOSUCCINATE SYNTHETASE"/>
    <property type="match status" value="1"/>
</dbReference>
<dbReference type="Pfam" id="PF00709">
    <property type="entry name" value="Adenylsucc_synt"/>
    <property type="match status" value="1"/>
</dbReference>
<dbReference type="SMART" id="SM00788">
    <property type="entry name" value="Adenylsucc_synt"/>
    <property type="match status" value="1"/>
</dbReference>
<dbReference type="SUPFAM" id="SSF52540">
    <property type="entry name" value="P-loop containing nucleoside triphosphate hydrolases"/>
    <property type="match status" value="1"/>
</dbReference>
<dbReference type="PROSITE" id="PS01266">
    <property type="entry name" value="ADENYLOSUCCIN_SYN_1"/>
    <property type="match status" value="1"/>
</dbReference>
<sequence length="423" mass="46283">MPVTAIVGGQWGDEGKGKVVDMLAQEADYVVRFSGGDNAGHTVINPMGEFKLHIIPSGVFYPGVKCIIGNGVVINPDVFIRERNELISRGVNVSNVFISDRAHLVLPYHILLDGLEEEARGNKSLGTTRRGIGPAFVDKYARMGIRVGDLLLPEYLRERLEYVLECKNQILTKVYDAAPISLDEIYETCLKWGKELAPNIRETTHIIEEAISQDKKIIMEGAQGALLDPDFGTYPYGTSSSPLAAGGCLGIGIGPASVSATLGVFKAYSTRVGGGPMPTELLDKTGDTIRNEAHEYGTTTGRPRRIGWFDAVAGRFSCQINGMTTAIMTRLDIMDILPKISICTAYELNGKIIKYFPANSGELAKCKPIYEEMPGWLCSTKEVRNYDDLPEAAKAYICRIEKLIGCQMSAVCIGPSREQTIYK</sequence>
<protein>
    <recommendedName>
        <fullName evidence="1">Adenylosuccinate synthetase</fullName>
        <shortName evidence="1">AMPSase</shortName>
        <shortName evidence="1">AdSS</shortName>
        <ecNumber evidence="1">6.3.4.4</ecNumber>
    </recommendedName>
    <alternativeName>
        <fullName evidence="1">IMP--aspartate ligase</fullName>
    </alternativeName>
</protein>
<evidence type="ECO:0000255" key="1">
    <source>
        <dbReference type="HAMAP-Rule" id="MF_00011"/>
    </source>
</evidence>
<evidence type="ECO:0000305" key="2"/>
<accession>A5FQS4</accession>
<keyword id="KW-0963">Cytoplasm</keyword>
<keyword id="KW-0342">GTP-binding</keyword>
<keyword id="KW-0436">Ligase</keyword>
<keyword id="KW-0460">Magnesium</keyword>
<keyword id="KW-0479">Metal-binding</keyword>
<keyword id="KW-0547">Nucleotide-binding</keyword>
<keyword id="KW-0658">Purine biosynthesis</keyword>
<gene>
    <name evidence="1" type="primary">purA</name>
    <name type="ordered locus">DehaBAV1_0867</name>
</gene>
<feature type="chain" id="PRO_0000337002" description="Adenylosuccinate synthetase">
    <location>
        <begin position="1"/>
        <end position="423"/>
    </location>
</feature>
<feature type="active site" description="Proton acceptor" evidence="1">
    <location>
        <position position="13"/>
    </location>
</feature>
<feature type="active site" description="Proton donor" evidence="1">
    <location>
        <position position="41"/>
    </location>
</feature>
<feature type="binding site" evidence="1">
    <location>
        <begin position="12"/>
        <end position="18"/>
    </location>
    <ligand>
        <name>GTP</name>
        <dbReference type="ChEBI" id="CHEBI:37565"/>
    </ligand>
</feature>
<feature type="binding site" description="in other chain" evidence="1">
    <location>
        <begin position="13"/>
        <end position="16"/>
    </location>
    <ligand>
        <name>IMP</name>
        <dbReference type="ChEBI" id="CHEBI:58053"/>
        <note>ligand shared between dimeric partners</note>
    </ligand>
</feature>
<feature type="binding site" evidence="1">
    <location>
        <position position="13"/>
    </location>
    <ligand>
        <name>Mg(2+)</name>
        <dbReference type="ChEBI" id="CHEBI:18420"/>
    </ligand>
</feature>
<feature type="binding site" description="in other chain" evidence="1">
    <location>
        <begin position="38"/>
        <end position="41"/>
    </location>
    <ligand>
        <name>IMP</name>
        <dbReference type="ChEBI" id="CHEBI:58053"/>
        <note>ligand shared between dimeric partners</note>
    </ligand>
</feature>
<feature type="binding site" evidence="1">
    <location>
        <begin position="40"/>
        <end position="42"/>
    </location>
    <ligand>
        <name>GTP</name>
        <dbReference type="ChEBI" id="CHEBI:37565"/>
    </ligand>
</feature>
<feature type="binding site" evidence="1">
    <location>
        <position position="40"/>
    </location>
    <ligand>
        <name>Mg(2+)</name>
        <dbReference type="ChEBI" id="CHEBI:18420"/>
    </ligand>
</feature>
<feature type="binding site" description="in other chain" evidence="1">
    <location>
        <position position="128"/>
    </location>
    <ligand>
        <name>IMP</name>
        <dbReference type="ChEBI" id="CHEBI:58053"/>
        <note>ligand shared between dimeric partners</note>
    </ligand>
</feature>
<feature type="binding site" evidence="1">
    <location>
        <position position="142"/>
    </location>
    <ligand>
        <name>IMP</name>
        <dbReference type="ChEBI" id="CHEBI:58053"/>
        <note>ligand shared between dimeric partners</note>
    </ligand>
</feature>
<feature type="binding site" description="in other chain" evidence="1">
    <location>
        <position position="223"/>
    </location>
    <ligand>
        <name>IMP</name>
        <dbReference type="ChEBI" id="CHEBI:58053"/>
        <note>ligand shared between dimeric partners</note>
    </ligand>
</feature>
<feature type="binding site" description="in other chain" evidence="1">
    <location>
        <position position="238"/>
    </location>
    <ligand>
        <name>IMP</name>
        <dbReference type="ChEBI" id="CHEBI:58053"/>
        <note>ligand shared between dimeric partners</note>
    </ligand>
</feature>
<feature type="binding site" evidence="1">
    <location>
        <begin position="298"/>
        <end position="304"/>
    </location>
    <ligand>
        <name>substrate</name>
    </ligand>
</feature>
<feature type="binding site" description="in other chain" evidence="1">
    <location>
        <position position="302"/>
    </location>
    <ligand>
        <name>IMP</name>
        <dbReference type="ChEBI" id="CHEBI:58053"/>
        <note>ligand shared between dimeric partners</note>
    </ligand>
</feature>
<feature type="binding site" evidence="1">
    <location>
        <position position="304"/>
    </location>
    <ligand>
        <name>GTP</name>
        <dbReference type="ChEBI" id="CHEBI:37565"/>
    </ligand>
</feature>
<feature type="binding site" evidence="1">
    <location>
        <begin position="330"/>
        <end position="332"/>
    </location>
    <ligand>
        <name>GTP</name>
        <dbReference type="ChEBI" id="CHEBI:37565"/>
    </ligand>
</feature>
<feature type="binding site" evidence="1">
    <location>
        <begin position="412"/>
        <end position="414"/>
    </location>
    <ligand>
        <name>GTP</name>
        <dbReference type="ChEBI" id="CHEBI:37565"/>
    </ligand>
</feature>
<name>PURA_DEHMB</name>
<comment type="function">
    <text evidence="1">Plays an important role in the de novo pathway of purine nucleotide biosynthesis. Catalyzes the first committed step in the biosynthesis of AMP from IMP.</text>
</comment>
<comment type="catalytic activity">
    <reaction evidence="1">
        <text>IMP + L-aspartate + GTP = N(6)-(1,2-dicarboxyethyl)-AMP + GDP + phosphate + 2 H(+)</text>
        <dbReference type="Rhea" id="RHEA:15753"/>
        <dbReference type="ChEBI" id="CHEBI:15378"/>
        <dbReference type="ChEBI" id="CHEBI:29991"/>
        <dbReference type="ChEBI" id="CHEBI:37565"/>
        <dbReference type="ChEBI" id="CHEBI:43474"/>
        <dbReference type="ChEBI" id="CHEBI:57567"/>
        <dbReference type="ChEBI" id="CHEBI:58053"/>
        <dbReference type="ChEBI" id="CHEBI:58189"/>
        <dbReference type="EC" id="6.3.4.4"/>
    </reaction>
</comment>
<comment type="cofactor">
    <cofactor evidence="1">
        <name>Mg(2+)</name>
        <dbReference type="ChEBI" id="CHEBI:18420"/>
    </cofactor>
    <text evidence="1">Binds 1 Mg(2+) ion per subunit.</text>
</comment>
<comment type="pathway">
    <text evidence="1">Purine metabolism; AMP biosynthesis via de novo pathway; AMP from IMP: step 1/2.</text>
</comment>
<comment type="subunit">
    <text evidence="1">Homodimer.</text>
</comment>
<comment type="subcellular location">
    <subcellularLocation>
        <location evidence="1">Cytoplasm</location>
    </subcellularLocation>
</comment>
<comment type="similarity">
    <text evidence="1">Belongs to the adenylosuccinate synthetase family.</text>
</comment>
<comment type="sequence caution" evidence="2">
    <conflict type="erroneous initiation">
        <sequence resource="EMBL-CDS" id="ABQ17449"/>
    </conflict>
</comment>